<feature type="chain" id="PRO_0000391161" description="NADH-quinone oxidoreductase subunit N">
    <location>
        <begin position="1"/>
        <end position="472"/>
    </location>
</feature>
<feature type="transmembrane region" description="Helical" evidence="1">
    <location>
        <begin position="5"/>
        <end position="25"/>
    </location>
</feature>
<feature type="transmembrane region" description="Helical" evidence="1">
    <location>
        <begin position="36"/>
        <end position="56"/>
    </location>
</feature>
<feature type="transmembrane region" description="Helical" evidence="1">
    <location>
        <begin position="77"/>
        <end position="97"/>
    </location>
</feature>
<feature type="transmembrane region" description="Helical" evidence="1">
    <location>
        <begin position="103"/>
        <end position="123"/>
    </location>
</feature>
<feature type="transmembrane region" description="Helical" evidence="1">
    <location>
        <begin position="126"/>
        <end position="146"/>
    </location>
</feature>
<feature type="transmembrane region" description="Helical" evidence="1">
    <location>
        <begin position="158"/>
        <end position="178"/>
    </location>
</feature>
<feature type="transmembrane region" description="Helical" evidence="1">
    <location>
        <begin position="197"/>
        <end position="217"/>
    </location>
</feature>
<feature type="transmembrane region" description="Helical" evidence="1">
    <location>
        <begin position="229"/>
        <end position="249"/>
    </location>
</feature>
<feature type="transmembrane region" description="Helical" evidence="1">
    <location>
        <begin position="264"/>
        <end position="284"/>
    </location>
</feature>
<feature type="transmembrane region" description="Helical" evidence="1">
    <location>
        <begin position="292"/>
        <end position="309"/>
    </location>
</feature>
<feature type="transmembrane region" description="Helical" evidence="1">
    <location>
        <begin position="319"/>
        <end position="339"/>
    </location>
</feature>
<feature type="transmembrane region" description="Helical" evidence="1">
    <location>
        <begin position="363"/>
        <end position="383"/>
    </location>
</feature>
<feature type="transmembrane region" description="Helical" evidence="1">
    <location>
        <begin position="396"/>
        <end position="416"/>
    </location>
</feature>
<feature type="transmembrane region" description="Helical" evidence="1">
    <location>
        <begin position="441"/>
        <end position="461"/>
    </location>
</feature>
<protein>
    <recommendedName>
        <fullName evidence="1">NADH-quinone oxidoreductase subunit N</fullName>
        <ecNumber evidence="1">7.1.1.-</ecNumber>
    </recommendedName>
    <alternativeName>
        <fullName evidence="1">NADH dehydrogenase I subunit N</fullName>
    </alternativeName>
    <alternativeName>
        <fullName evidence="1">NDH-1 subunit N</fullName>
    </alternativeName>
</protein>
<keyword id="KW-1003">Cell membrane</keyword>
<keyword id="KW-0472">Membrane</keyword>
<keyword id="KW-0520">NAD</keyword>
<keyword id="KW-0874">Quinone</keyword>
<keyword id="KW-1185">Reference proteome</keyword>
<keyword id="KW-1278">Translocase</keyword>
<keyword id="KW-0812">Transmembrane</keyword>
<keyword id="KW-1133">Transmembrane helix</keyword>
<keyword id="KW-0813">Transport</keyword>
<comment type="function">
    <text evidence="1">NDH-1 shuttles electrons from NADH, via FMN and iron-sulfur (Fe-S) centers, to quinones in the respiratory chain. The immediate electron acceptor for the enzyme in this species is believed to be a menaquinone. Couples the redox reaction to proton translocation (for every two electrons transferred, four hydrogen ions are translocated across the cytoplasmic membrane), and thus conserves the redox energy in a proton gradient.</text>
</comment>
<comment type="catalytic activity">
    <reaction evidence="1">
        <text>a quinone + NADH + 5 H(+)(in) = a quinol + NAD(+) + 4 H(+)(out)</text>
        <dbReference type="Rhea" id="RHEA:57888"/>
        <dbReference type="ChEBI" id="CHEBI:15378"/>
        <dbReference type="ChEBI" id="CHEBI:24646"/>
        <dbReference type="ChEBI" id="CHEBI:57540"/>
        <dbReference type="ChEBI" id="CHEBI:57945"/>
        <dbReference type="ChEBI" id="CHEBI:132124"/>
    </reaction>
</comment>
<comment type="subunit">
    <text evidence="1">NDH-1 is composed of 14 different subunits. Subunits NuoA, H, J, K, L, M, N constitute the membrane sector of the complex.</text>
</comment>
<comment type="subcellular location">
    <subcellularLocation>
        <location evidence="1">Cell membrane</location>
        <topology evidence="1">Multi-pass membrane protein</topology>
    </subcellularLocation>
</comment>
<comment type="similarity">
    <text evidence="1">Belongs to the complex I subunit 2 family.</text>
</comment>
<proteinExistence type="inferred from homology"/>
<gene>
    <name evidence="1" type="primary">nuoN</name>
    <name type="ordered locus">Helmi_21370</name>
    <name type="ORF">HM1_2206</name>
</gene>
<reference key="1">
    <citation type="journal article" date="2008" name="J. Bacteriol.">
        <title>The genome of Heliobacterium modesticaldum, a phototrophic representative of the Firmicutes containing the simplest photosynthetic apparatus.</title>
        <authorList>
            <person name="Sattley W.M."/>
            <person name="Madigan M.T."/>
            <person name="Swingley W.D."/>
            <person name="Cheung P.C."/>
            <person name="Clocksin K.M."/>
            <person name="Conrad A.L."/>
            <person name="Dejesa L.C."/>
            <person name="Honchak B.M."/>
            <person name="Jung D.O."/>
            <person name="Karbach L.E."/>
            <person name="Kurdoglu A."/>
            <person name="Lahiri S."/>
            <person name="Mastrian S.D."/>
            <person name="Page L.E."/>
            <person name="Taylor H.L."/>
            <person name="Wang Z.T."/>
            <person name="Raymond J."/>
            <person name="Chen M."/>
            <person name="Blankenship R.E."/>
            <person name="Touchman J.W."/>
        </authorList>
    </citation>
    <scope>NUCLEOTIDE SEQUENCE [LARGE SCALE GENOMIC DNA]</scope>
    <source>
        <strain>ATCC 51547 / Ice1</strain>
    </source>
</reference>
<dbReference type="EC" id="7.1.1.-" evidence="1"/>
<dbReference type="EMBL" id="CP000930">
    <property type="protein sequence ID" value="ABZ84762.1"/>
    <property type="molecule type" value="Genomic_DNA"/>
</dbReference>
<dbReference type="RefSeq" id="WP_012283262.1">
    <property type="nucleotide sequence ID" value="NC_010337.2"/>
</dbReference>
<dbReference type="SMR" id="B0TH87"/>
<dbReference type="STRING" id="498761.HM1_2206"/>
<dbReference type="KEGG" id="hmo:HM1_2206"/>
<dbReference type="eggNOG" id="COG1007">
    <property type="taxonomic scope" value="Bacteria"/>
</dbReference>
<dbReference type="HOGENOM" id="CLU_007100_1_5_9"/>
<dbReference type="OrthoDB" id="9807568at2"/>
<dbReference type="Proteomes" id="UP000008550">
    <property type="component" value="Chromosome"/>
</dbReference>
<dbReference type="GO" id="GO:0005886">
    <property type="term" value="C:plasma membrane"/>
    <property type="evidence" value="ECO:0007669"/>
    <property type="project" value="UniProtKB-SubCell"/>
</dbReference>
<dbReference type="GO" id="GO:0008137">
    <property type="term" value="F:NADH dehydrogenase (ubiquinone) activity"/>
    <property type="evidence" value="ECO:0007669"/>
    <property type="project" value="InterPro"/>
</dbReference>
<dbReference type="GO" id="GO:0050136">
    <property type="term" value="F:NADH:ubiquinone reductase (non-electrogenic) activity"/>
    <property type="evidence" value="ECO:0007669"/>
    <property type="project" value="UniProtKB-UniRule"/>
</dbReference>
<dbReference type="GO" id="GO:0048038">
    <property type="term" value="F:quinone binding"/>
    <property type="evidence" value="ECO:0007669"/>
    <property type="project" value="UniProtKB-KW"/>
</dbReference>
<dbReference type="GO" id="GO:0042773">
    <property type="term" value="P:ATP synthesis coupled electron transport"/>
    <property type="evidence" value="ECO:0007669"/>
    <property type="project" value="InterPro"/>
</dbReference>
<dbReference type="HAMAP" id="MF_00445">
    <property type="entry name" value="NDH1_NuoN_1"/>
    <property type="match status" value="1"/>
</dbReference>
<dbReference type="InterPro" id="IPR010096">
    <property type="entry name" value="NADH-Q_OxRdtase_suN/2"/>
</dbReference>
<dbReference type="InterPro" id="IPR001750">
    <property type="entry name" value="ND/Mrp_TM"/>
</dbReference>
<dbReference type="NCBIfam" id="TIGR01770">
    <property type="entry name" value="NDH_I_N"/>
    <property type="match status" value="1"/>
</dbReference>
<dbReference type="PANTHER" id="PTHR22773">
    <property type="entry name" value="NADH DEHYDROGENASE"/>
    <property type="match status" value="1"/>
</dbReference>
<dbReference type="Pfam" id="PF00361">
    <property type="entry name" value="Proton_antipo_M"/>
    <property type="match status" value="1"/>
</dbReference>
<dbReference type="PRINTS" id="PR01434">
    <property type="entry name" value="NADHDHGNASE5"/>
</dbReference>
<accession>B0TH87</accession>
<name>NUON_HELMI</name>
<sequence length="472" mass="50423">MNFSLLTTEMLTALLGIGLLAIGLLNRKKDSHRGVAYAAVFGLLGILVVTFFQYGINTNTFHQLWILDDYSVFMKEIFLVAAILVILSAIDYVDGLPRFKTEFYALLVFATLGMMVMASANDLVTLYVGMELMTITFFILVAYILGDGRSSEAGVKYLLLGGASSAVLLYGLSLLYGLTGTTVIPDLLARLTWSPALAIAVVTIIAGFGFKISAVPFHMWSPDIYEGAPTPVTGFLAAASKAAGFAVLVRLFLEGMPLQGGADWLTVIAVLAGVTMVIGNVVAIPQTNIKRMLAYSSVAQAGYLLVGLMSTDAPGVKGILFYAMLYVVANMGAFAVATAVGRAIGSDEIADYAGLSQRQPLLASVMTISLLSLAGIPPLAGFVGKLYLFSAIMDKGVLWPAFLGFVMSMVSVYYYLNVSLYMWRDDPKDDRPIPVSGPMKLTVIFSMVVTVILGIYPGPLAEVATVAAKSLF</sequence>
<evidence type="ECO:0000255" key="1">
    <source>
        <dbReference type="HAMAP-Rule" id="MF_00445"/>
    </source>
</evidence>
<organism>
    <name type="scientific">Heliobacterium modesticaldum (strain ATCC 51547 / Ice1)</name>
    <dbReference type="NCBI Taxonomy" id="498761"/>
    <lineage>
        <taxon>Bacteria</taxon>
        <taxon>Bacillati</taxon>
        <taxon>Bacillota</taxon>
        <taxon>Clostridia</taxon>
        <taxon>Eubacteriales</taxon>
        <taxon>Heliobacteriaceae</taxon>
        <taxon>Heliomicrobium</taxon>
    </lineage>
</organism>